<organism>
    <name type="scientific">Homo sapiens</name>
    <name type="common">Human</name>
    <dbReference type="NCBI Taxonomy" id="9606"/>
    <lineage>
        <taxon>Eukaryota</taxon>
        <taxon>Metazoa</taxon>
        <taxon>Chordata</taxon>
        <taxon>Craniata</taxon>
        <taxon>Vertebrata</taxon>
        <taxon>Euteleostomi</taxon>
        <taxon>Mammalia</taxon>
        <taxon>Eutheria</taxon>
        <taxon>Euarchontoglires</taxon>
        <taxon>Primates</taxon>
        <taxon>Haplorrhini</taxon>
        <taxon>Catarrhini</taxon>
        <taxon>Hominidae</taxon>
        <taxon>Homo</taxon>
    </lineage>
</organism>
<dbReference type="EMBL" id="U07151">
    <property type="protein sequence ID" value="AAA21654.1"/>
    <property type="molecule type" value="mRNA"/>
</dbReference>
<dbReference type="EMBL" id="AF493889">
    <property type="protein sequence ID" value="AAM12603.1"/>
    <property type="molecule type" value="mRNA"/>
</dbReference>
<dbReference type="EMBL" id="AK312525">
    <property type="protein sequence ID" value="BAG35424.1"/>
    <property type="molecule type" value="mRNA"/>
</dbReference>
<dbReference type="EMBL" id="CR407637">
    <property type="protein sequence ID" value="CAG28565.1"/>
    <property type="molecule type" value="mRNA"/>
</dbReference>
<dbReference type="EMBL" id="AL391121">
    <property type="status" value="NOT_ANNOTATED_CDS"/>
    <property type="molecule type" value="Genomic_DNA"/>
</dbReference>
<dbReference type="EMBL" id="BC009841">
    <property type="protein sequence ID" value="AAH09841.1"/>
    <property type="molecule type" value="mRNA"/>
</dbReference>
<dbReference type="CCDS" id="CCDS7538.1"/>
<dbReference type="PIR" id="A54869">
    <property type="entry name" value="A54869"/>
</dbReference>
<dbReference type="RefSeq" id="NP_004302.1">
    <property type="nucleotide sequence ID" value="NM_004311.4"/>
</dbReference>
<dbReference type="RefSeq" id="XP_016871749.1">
    <property type="nucleotide sequence ID" value="XM_017016260.2"/>
</dbReference>
<dbReference type="RefSeq" id="XP_054221917.1">
    <property type="nucleotide sequence ID" value="XM_054365942.1"/>
</dbReference>
<dbReference type="SMR" id="P36405"/>
<dbReference type="BioGRID" id="106896">
    <property type="interactions" value="76"/>
</dbReference>
<dbReference type="CORUM" id="P36405"/>
<dbReference type="DIP" id="DIP-47537N"/>
<dbReference type="FunCoup" id="P36405">
    <property type="interactions" value="535"/>
</dbReference>
<dbReference type="IntAct" id="P36405">
    <property type="interactions" value="46"/>
</dbReference>
<dbReference type="MINT" id="P36405"/>
<dbReference type="STRING" id="9606.ENSP00000260746"/>
<dbReference type="DrugBank" id="DB03814">
    <property type="generic name" value="2-(N-morpholino)ethanesulfonic acid"/>
</dbReference>
<dbReference type="DrugBank" id="DB04315">
    <property type="generic name" value="Guanosine-5'-Diphosphate"/>
</dbReference>
<dbReference type="GlyGen" id="P36405">
    <property type="glycosylation" value="2 sites, 1 O-linked glycan (1 site)"/>
</dbReference>
<dbReference type="iPTMnet" id="P36405"/>
<dbReference type="PhosphoSitePlus" id="P36405"/>
<dbReference type="SwissPalm" id="P36405"/>
<dbReference type="BioMuta" id="ARL3"/>
<dbReference type="DMDM" id="543851"/>
<dbReference type="REPRODUCTION-2DPAGE" id="IPI00003327"/>
<dbReference type="jPOST" id="P36405"/>
<dbReference type="MassIVE" id="P36405"/>
<dbReference type="PaxDb" id="9606-ENSP00000260746"/>
<dbReference type="PeptideAtlas" id="P36405"/>
<dbReference type="ProteomicsDB" id="55199"/>
<dbReference type="Pumba" id="P36405"/>
<dbReference type="Antibodypedia" id="31479">
    <property type="antibodies" value="433 antibodies from 29 providers"/>
</dbReference>
<dbReference type="DNASU" id="403"/>
<dbReference type="Ensembl" id="ENST00000260746.6">
    <property type="protein sequence ID" value="ENSP00000260746.4"/>
    <property type="gene ID" value="ENSG00000138175.9"/>
</dbReference>
<dbReference type="GeneID" id="403"/>
<dbReference type="KEGG" id="hsa:403"/>
<dbReference type="MANE-Select" id="ENST00000260746.6">
    <property type="protein sequence ID" value="ENSP00000260746.4"/>
    <property type="RefSeq nucleotide sequence ID" value="NM_004311.4"/>
    <property type="RefSeq protein sequence ID" value="NP_004302.1"/>
</dbReference>
<dbReference type="UCSC" id="uc001kwa.4">
    <property type="organism name" value="human"/>
</dbReference>
<dbReference type="AGR" id="HGNC:694"/>
<dbReference type="CTD" id="403"/>
<dbReference type="DisGeNET" id="403"/>
<dbReference type="GeneCards" id="ARL3"/>
<dbReference type="HGNC" id="HGNC:694">
    <property type="gene designation" value="ARL3"/>
</dbReference>
<dbReference type="HPA" id="ENSG00000138175">
    <property type="expression patterns" value="Tissue enhanced (retina)"/>
</dbReference>
<dbReference type="MalaCards" id="ARL3"/>
<dbReference type="MIM" id="604695">
    <property type="type" value="gene"/>
</dbReference>
<dbReference type="MIM" id="618161">
    <property type="type" value="phenotype"/>
</dbReference>
<dbReference type="MIM" id="618173">
    <property type="type" value="phenotype"/>
</dbReference>
<dbReference type="neXtProt" id="NX_P36405"/>
<dbReference type="OpenTargets" id="ENSG00000138175"/>
<dbReference type="Orphanet" id="475">
    <property type="disease" value="Joubert syndrome"/>
</dbReference>
<dbReference type="Orphanet" id="791">
    <property type="disease" value="Retinitis pigmentosa"/>
</dbReference>
<dbReference type="PharmGKB" id="PA24987"/>
<dbReference type="VEuPathDB" id="HostDB:ENSG00000138175"/>
<dbReference type="eggNOG" id="KOG0074">
    <property type="taxonomic scope" value="Eukaryota"/>
</dbReference>
<dbReference type="GeneTree" id="ENSGT00940000155737"/>
<dbReference type="HOGENOM" id="CLU_040729_12_0_1"/>
<dbReference type="InParanoid" id="P36405"/>
<dbReference type="OMA" id="EGMEWVC"/>
<dbReference type="OrthoDB" id="2011769at2759"/>
<dbReference type="PAN-GO" id="P36405">
    <property type="GO annotations" value="4 GO annotations based on evolutionary models"/>
</dbReference>
<dbReference type="PhylomeDB" id="P36405"/>
<dbReference type="TreeFam" id="TF105463"/>
<dbReference type="PathwayCommons" id="P36405"/>
<dbReference type="Reactome" id="R-HSA-5624138">
    <property type="pathway name" value="Trafficking of myristoylated proteins to the cilium"/>
</dbReference>
<dbReference type="SignaLink" id="P36405"/>
<dbReference type="BioGRID-ORCS" id="403">
    <property type="hits" value="25 hits in 1167 CRISPR screens"/>
</dbReference>
<dbReference type="CD-CODE" id="8C2F96ED">
    <property type="entry name" value="Centrosome"/>
</dbReference>
<dbReference type="ChiTaRS" id="ARL3">
    <property type="organism name" value="human"/>
</dbReference>
<dbReference type="GeneWiki" id="ARL3"/>
<dbReference type="GenomeRNAi" id="403"/>
<dbReference type="Pharos" id="P36405">
    <property type="development level" value="Tbio"/>
</dbReference>
<dbReference type="PRO" id="PR:P36405"/>
<dbReference type="Proteomes" id="UP000005640">
    <property type="component" value="Chromosome 10"/>
</dbReference>
<dbReference type="RNAct" id="P36405">
    <property type="molecule type" value="protein"/>
</dbReference>
<dbReference type="Bgee" id="ENSG00000138175">
    <property type="expression patterns" value="Expressed in bronchial epithelial cell and 214 other cell types or tissues"/>
</dbReference>
<dbReference type="GO" id="GO:0005813">
    <property type="term" value="C:centrosome"/>
    <property type="evidence" value="ECO:0000314"/>
    <property type="project" value="UniProtKB"/>
</dbReference>
<dbReference type="GO" id="GO:0036064">
    <property type="term" value="C:ciliary basal body"/>
    <property type="evidence" value="ECO:0000314"/>
    <property type="project" value="HPA"/>
</dbReference>
<dbReference type="GO" id="GO:0005929">
    <property type="term" value="C:cilium"/>
    <property type="evidence" value="ECO:0000314"/>
    <property type="project" value="UniProtKB"/>
</dbReference>
<dbReference type="GO" id="GO:0005737">
    <property type="term" value="C:cytoplasm"/>
    <property type="evidence" value="ECO:0000318"/>
    <property type="project" value="GO_Central"/>
</dbReference>
<dbReference type="GO" id="GO:0005881">
    <property type="term" value="C:cytoplasmic microtubule"/>
    <property type="evidence" value="ECO:0000314"/>
    <property type="project" value="UniProtKB"/>
</dbReference>
<dbReference type="GO" id="GO:0070062">
    <property type="term" value="C:extracellular exosome"/>
    <property type="evidence" value="ECO:0007005"/>
    <property type="project" value="UniProtKB"/>
</dbReference>
<dbReference type="GO" id="GO:0005794">
    <property type="term" value="C:Golgi apparatus"/>
    <property type="evidence" value="ECO:0000314"/>
    <property type="project" value="UniProtKB"/>
</dbReference>
<dbReference type="GO" id="GO:0000139">
    <property type="term" value="C:Golgi membrane"/>
    <property type="evidence" value="ECO:0007669"/>
    <property type="project" value="UniProtKB-SubCell"/>
</dbReference>
<dbReference type="GO" id="GO:0015630">
    <property type="term" value="C:microtubule cytoskeleton"/>
    <property type="evidence" value="ECO:0000318"/>
    <property type="project" value="GO_Central"/>
</dbReference>
<dbReference type="GO" id="GO:0030496">
    <property type="term" value="C:midbody"/>
    <property type="evidence" value="ECO:0000314"/>
    <property type="project" value="UniProtKB"/>
</dbReference>
<dbReference type="GO" id="GO:0005654">
    <property type="term" value="C:nucleoplasm"/>
    <property type="evidence" value="ECO:0000314"/>
    <property type="project" value="HPA"/>
</dbReference>
<dbReference type="GO" id="GO:0005634">
    <property type="term" value="C:nucleus"/>
    <property type="evidence" value="ECO:0000314"/>
    <property type="project" value="UniProtKB"/>
</dbReference>
<dbReference type="GO" id="GO:0032391">
    <property type="term" value="C:photoreceptor connecting cilium"/>
    <property type="evidence" value="ECO:0000314"/>
    <property type="project" value="UniProtKB"/>
</dbReference>
<dbReference type="GO" id="GO:0005876">
    <property type="term" value="C:spindle microtubule"/>
    <property type="evidence" value="ECO:0000314"/>
    <property type="project" value="UniProtKB"/>
</dbReference>
<dbReference type="GO" id="GO:0019003">
    <property type="term" value="F:GDP binding"/>
    <property type="evidence" value="ECO:0000314"/>
    <property type="project" value="UniProtKB"/>
</dbReference>
<dbReference type="GO" id="GO:0005525">
    <property type="term" value="F:GTP binding"/>
    <property type="evidence" value="ECO:0000314"/>
    <property type="project" value="UniProtKB"/>
</dbReference>
<dbReference type="GO" id="GO:0003924">
    <property type="term" value="F:GTPase activity"/>
    <property type="evidence" value="ECO:0007669"/>
    <property type="project" value="Ensembl"/>
</dbReference>
<dbReference type="GO" id="GO:0000287">
    <property type="term" value="F:magnesium ion binding"/>
    <property type="evidence" value="ECO:0007669"/>
    <property type="project" value="Ensembl"/>
</dbReference>
<dbReference type="GO" id="GO:0008017">
    <property type="term" value="F:microtubule binding"/>
    <property type="evidence" value="ECO:0000314"/>
    <property type="project" value="UniProtKB"/>
</dbReference>
<dbReference type="GO" id="GO:0060271">
    <property type="term" value="P:cilium assembly"/>
    <property type="evidence" value="ECO:0000315"/>
    <property type="project" value="UniProtKB"/>
</dbReference>
<dbReference type="GO" id="GO:0006893">
    <property type="term" value="P:Golgi to plasma membrane transport"/>
    <property type="evidence" value="ECO:0000250"/>
    <property type="project" value="UniProtKB"/>
</dbReference>
<dbReference type="GO" id="GO:0042073">
    <property type="term" value="P:intraciliary transport"/>
    <property type="evidence" value="ECO:0007669"/>
    <property type="project" value="Ensembl"/>
</dbReference>
<dbReference type="GO" id="GO:0001822">
    <property type="term" value="P:kidney development"/>
    <property type="evidence" value="ECO:0000250"/>
    <property type="project" value="UniProtKB"/>
</dbReference>
<dbReference type="GO" id="GO:0000281">
    <property type="term" value="P:mitotic cytokinesis"/>
    <property type="evidence" value="ECO:0000315"/>
    <property type="project" value="UniProtKB"/>
</dbReference>
<dbReference type="GO" id="GO:0042461">
    <property type="term" value="P:photoreceptor cell development"/>
    <property type="evidence" value="ECO:0000250"/>
    <property type="project" value="UniProtKB"/>
</dbReference>
<dbReference type="GO" id="GO:0006892">
    <property type="term" value="P:post-Golgi vesicle-mediated transport"/>
    <property type="evidence" value="ECO:0000315"/>
    <property type="project" value="MGI"/>
</dbReference>
<dbReference type="GO" id="GO:1903441">
    <property type="term" value="P:protein localization to ciliary membrane"/>
    <property type="evidence" value="ECO:0000250"/>
    <property type="project" value="UniProtKB"/>
</dbReference>
<dbReference type="GO" id="GO:0061512">
    <property type="term" value="P:protein localization to cilium"/>
    <property type="evidence" value="ECO:0000315"/>
    <property type="project" value="UniProtKB"/>
</dbReference>
<dbReference type="GO" id="GO:0015031">
    <property type="term" value="P:protein transport"/>
    <property type="evidence" value="ECO:0007669"/>
    <property type="project" value="UniProtKB-KW"/>
</dbReference>
<dbReference type="GO" id="GO:0007264">
    <property type="term" value="P:small GTPase-mediated signal transduction"/>
    <property type="evidence" value="ECO:0000314"/>
    <property type="project" value="UniProtKB"/>
</dbReference>
<dbReference type="GO" id="GO:0007224">
    <property type="term" value="P:smoothened signaling pathway"/>
    <property type="evidence" value="ECO:0007669"/>
    <property type="project" value="Ensembl"/>
</dbReference>
<dbReference type="CDD" id="cd04155">
    <property type="entry name" value="Arl3"/>
    <property type="match status" value="1"/>
</dbReference>
<dbReference type="FunFam" id="3.40.50.300:FF:000281">
    <property type="entry name" value="ADP-ribosylation factor-like protein 3"/>
    <property type="match status" value="1"/>
</dbReference>
<dbReference type="Gene3D" id="3.40.50.300">
    <property type="entry name" value="P-loop containing nucleotide triphosphate hydrolases"/>
    <property type="match status" value="1"/>
</dbReference>
<dbReference type="InterPro" id="IPR044612">
    <property type="entry name" value="ARL2/3"/>
</dbReference>
<dbReference type="InterPro" id="IPR027417">
    <property type="entry name" value="P-loop_NTPase"/>
</dbReference>
<dbReference type="InterPro" id="IPR005225">
    <property type="entry name" value="Small_GTP-bd"/>
</dbReference>
<dbReference type="InterPro" id="IPR006689">
    <property type="entry name" value="Small_GTPase_ARF/SAR"/>
</dbReference>
<dbReference type="NCBIfam" id="TIGR00231">
    <property type="entry name" value="small_GTP"/>
    <property type="match status" value="1"/>
</dbReference>
<dbReference type="PANTHER" id="PTHR45697">
    <property type="entry name" value="ADP-RIBOSYLATION FACTOR-LIKE PROTEIN 2-RELATED"/>
    <property type="match status" value="1"/>
</dbReference>
<dbReference type="Pfam" id="PF00025">
    <property type="entry name" value="Arf"/>
    <property type="match status" value="1"/>
</dbReference>
<dbReference type="PRINTS" id="PR00328">
    <property type="entry name" value="SAR1GTPBP"/>
</dbReference>
<dbReference type="SMART" id="SM00177">
    <property type="entry name" value="ARF"/>
    <property type="match status" value="1"/>
</dbReference>
<dbReference type="SMART" id="SM00178">
    <property type="entry name" value="SAR"/>
    <property type="match status" value="1"/>
</dbReference>
<dbReference type="SUPFAM" id="SSF52540">
    <property type="entry name" value="P-loop containing nucleoside triphosphate hydrolases"/>
    <property type="match status" value="1"/>
</dbReference>
<dbReference type="PROSITE" id="PS51417">
    <property type="entry name" value="ARF"/>
    <property type="match status" value="1"/>
</dbReference>
<evidence type="ECO:0000250" key="1"/>
<evidence type="ECO:0000250" key="2">
    <source>
        <dbReference type="UniProtKB" id="Q9WUL7"/>
    </source>
</evidence>
<evidence type="ECO:0000255" key="3"/>
<evidence type="ECO:0000269" key="4">
    <source>
    </source>
</evidence>
<evidence type="ECO:0000269" key="5">
    <source>
    </source>
</evidence>
<evidence type="ECO:0000269" key="6">
    <source>
    </source>
</evidence>
<evidence type="ECO:0000269" key="7">
    <source>
    </source>
</evidence>
<evidence type="ECO:0000269" key="8">
    <source>
    </source>
</evidence>
<evidence type="ECO:0000269" key="9">
    <source>
    </source>
</evidence>
<evidence type="ECO:0000269" key="10">
    <source>
    </source>
</evidence>
<evidence type="ECO:0000269" key="11">
    <source>
    </source>
</evidence>
<evidence type="ECO:0000269" key="12">
    <source>
    </source>
</evidence>
<evidence type="ECO:0000269" key="13">
    <source>
    </source>
</evidence>
<evidence type="ECO:0000269" key="14">
    <source ref="4"/>
</evidence>
<evidence type="ECO:0000305" key="15"/>
<evidence type="ECO:0007744" key="16">
    <source>
    </source>
</evidence>
<sequence>MGLLSILRKLKSAPDQEVRILLLGLDNAGKTTLLKQLASEDISHITPTQGFNIKSVQSQGFKLNVWDIGGQRKIRPYWKNYFENTDILIYVIDSADRKRFEETGQELAELLEEEKLSCVPVLIFANKQDLLTAAPASEIAEGLNLHTIRDRVWQIQSCSALTGEGVQDGMNWVCKNVNAKKK</sequence>
<name>ARL3_HUMAN</name>
<keyword id="KW-0131">Cell cycle</keyword>
<keyword id="KW-0132">Cell division</keyword>
<keyword id="KW-0966">Cell projection</keyword>
<keyword id="KW-1186">Ciliopathy</keyword>
<keyword id="KW-0963">Cytoplasm</keyword>
<keyword id="KW-0206">Cytoskeleton</keyword>
<keyword id="KW-0903">Direct protein sequencing</keyword>
<keyword id="KW-0225">Disease variant</keyword>
<keyword id="KW-0333">Golgi apparatus</keyword>
<keyword id="KW-0342">GTP-binding</keyword>
<keyword id="KW-0979">Joubert syndrome</keyword>
<keyword id="KW-0449">Lipoprotein</keyword>
<keyword id="KW-0460">Magnesium</keyword>
<keyword id="KW-0472">Membrane</keyword>
<keyword id="KW-0479">Metal-binding</keyword>
<keyword id="KW-0519">Myristate</keyword>
<keyword id="KW-0547">Nucleotide-binding</keyword>
<keyword id="KW-0539">Nucleus</keyword>
<keyword id="KW-0597">Phosphoprotein</keyword>
<keyword id="KW-0653">Protein transport</keyword>
<keyword id="KW-1267">Proteomics identification</keyword>
<keyword id="KW-1185">Reference proteome</keyword>
<keyword id="KW-0813">Transport</keyword>
<reference key="1">
    <citation type="journal article" date="1994" name="J. Biol. Chem.">
        <title>ADP-ribosylation factor (ARF)-like 3, a new member of the ARF family of GTP-binding proteins cloned from human and rat tissues.</title>
        <authorList>
            <person name="Cavenagh M.A."/>
            <person name="Breiner M."/>
            <person name="Schurmann A."/>
            <person name="Rosenwald A.G."/>
            <person name="Terui T."/>
            <person name="Zhang C.-J."/>
            <person name="Randoazzo P.A."/>
            <person name="Adams M."/>
            <person name="Joost H.-G."/>
            <person name="Kahn R.A."/>
        </authorList>
    </citation>
    <scope>NUCLEOTIDE SEQUENCE [MRNA]</scope>
</reference>
<reference key="2">
    <citation type="submission" date="2002-03" db="EMBL/GenBank/DDBJ databases">
        <title>cDNA clones of human proteins involved in signal transduction sequenced by the Guthrie cDNA resource center (www.cdna.org).</title>
        <authorList>
            <person name="Puhl H.L. III"/>
            <person name="Ikeda S.R."/>
            <person name="Aronstam R.S."/>
        </authorList>
    </citation>
    <scope>NUCLEOTIDE SEQUENCE [LARGE SCALE MRNA]</scope>
    <source>
        <tissue>Brain</tissue>
    </source>
</reference>
<reference key="3">
    <citation type="journal article" date="2004" name="Nat. Genet.">
        <title>Complete sequencing and characterization of 21,243 full-length human cDNAs.</title>
        <authorList>
            <person name="Ota T."/>
            <person name="Suzuki Y."/>
            <person name="Nishikawa T."/>
            <person name="Otsuki T."/>
            <person name="Sugiyama T."/>
            <person name="Irie R."/>
            <person name="Wakamatsu A."/>
            <person name="Hayashi K."/>
            <person name="Sato H."/>
            <person name="Nagai K."/>
            <person name="Kimura K."/>
            <person name="Makita H."/>
            <person name="Sekine M."/>
            <person name="Obayashi M."/>
            <person name="Nishi T."/>
            <person name="Shibahara T."/>
            <person name="Tanaka T."/>
            <person name="Ishii S."/>
            <person name="Yamamoto J."/>
            <person name="Saito K."/>
            <person name="Kawai Y."/>
            <person name="Isono Y."/>
            <person name="Nakamura Y."/>
            <person name="Nagahari K."/>
            <person name="Murakami K."/>
            <person name="Yasuda T."/>
            <person name="Iwayanagi T."/>
            <person name="Wagatsuma M."/>
            <person name="Shiratori A."/>
            <person name="Sudo H."/>
            <person name="Hosoiri T."/>
            <person name="Kaku Y."/>
            <person name="Kodaira H."/>
            <person name="Kondo H."/>
            <person name="Sugawara M."/>
            <person name="Takahashi M."/>
            <person name="Kanda K."/>
            <person name="Yokoi T."/>
            <person name="Furuya T."/>
            <person name="Kikkawa E."/>
            <person name="Omura Y."/>
            <person name="Abe K."/>
            <person name="Kamihara K."/>
            <person name="Katsuta N."/>
            <person name="Sato K."/>
            <person name="Tanikawa M."/>
            <person name="Yamazaki M."/>
            <person name="Ninomiya K."/>
            <person name="Ishibashi T."/>
            <person name="Yamashita H."/>
            <person name="Murakawa K."/>
            <person name="Fujimori K."/>
            <person name="Tanai H."/>
            <person name="Kimata M."/>
            <person name="Watanabe M."/>
            <person name="Hiraoka S."/>
            <person name="Chiba Y."/>
            <person name="Ishida S."/>
            <person name="Ono Y."/>
            <person name="Takiguchi S."/>
            <person name="Watanabe S."/>
            <person name="Yosida M."/>
            <person name="Hotuta T."/>
            <person name="Kusano J."/>
            <person name="Kanehori K."/>
            <person name="Takahashi-Fujii A."/>
            <person name="Hara H."/>
            <person name="Tanase T.-O."/>
            <person name="Nomura Y."/>
            <person name="Togiya S."/>
            <person name="Komai F."/>
            <person name="Hara R."/>
            <person name="Takeuchi K."/>
            <person name="Arita M."/>
            <person name="Imose N."/>
            <person name="Musashino K."/>
            <person name="Yuuki H."/>
            <person name="Oshima A."/>
            <person name="Sasaki N."/>
            <person name="Aotsuka S."/>
            <person name="Yoshikawa Y."/>
            <person name="Matsunawa H."/>
            <person name="Ichihara T."/>
            <person name="Shiohata N."/>
            <person name="Sano S."/>
            <person name="Moriya S."/>
            <person name="Momiyama H."/>
            <person name="Satoh N."/>
            <person name="Takami S."/>
            <person name="Terashima Y."/>
            <person name="Suzuki O."/>
            <person name="Nakagawa S."/>
            <person name="Senoh A."/>
            <person name="Mizoguchi H."/>
            <person name="Goto Y."/>
            <person name="Shimizu F."/>
            <person name="Wakebe H."/>
            <person name="Hishigaki H."/>
            <person name="Watanabe T."/>
            <person name="Sugiyama A."/>
            <person name="Takemoto M."/>
            <person name="Kawakami B."/>
            <person name="Yamazaki M."/>
            <person name="Watanabe K."/>
            <person name="Kumagai A."/>
            <person name="Itakura S."/>
            <person name="Fukuzumi Y."/>
            <person name="Fujimori Y."/>
            <person name="Komiyama M."/>
            <person name="Tashiro H."/>
            <person name="Tanigami A."/>
            <person name="Fujiwara T."/>
            <person name="Ono T."/>
            <person name="Yamada K."/>
            <person name="Fujii Y."/>
            <person name="Ozaki K."/>
            <person name="Hirao M."/>
            <person name="Ohmori Y."/>
            <person name="Kawabata A."/>
            <person name="Hikiji T."/>
            <person name="Kobatake N."/>
            <person name="Inagaki H."/>
            <person name="Ikema Y."/>
            <person name="Okamoto S."/>
            <person name="Okitani R."/>
            <person name="Kawakami T."/>
            <person name="Noguchi S."/>
            <person name="Itoh T."/>
            <person name="Shigeta K."/>
            <person name="Senba T."/>
            <person name="Matsumura K."/>
            <person name="Nakajima Y."/>
            <person name="Mizuno T."/>
            <person name="Morinaga M."/>
            <person name="Sasaki M."/>
            <person name="Togashi T."/>
            <person name="Oyama M."/>
            <person name="Hata H."/>
            <person name="Watanabe M."/>
            <person name="Komatsu T."/>
            <person name="Mizushima-Sugano J."/>
            <person name="Satoh T."/>
            <person name="Shirai Y."/>
            <person name="Takahashi Y."/>
            <person name="Nakagawa K."/>
            <person name="Okumura K."/>
            <person name="Nagase T."/>
            <person name="Nomura N."/>
            <person name="Kikuchi H."/>
            <person name="Masuho Y."/>
            <person name="Yamashita R."/>
            <person name="Nakai K."/>
            <person name="Yada T."/>
            <person name="Nakamura Y."/>
            <person name="Ohara O."/>
            <person name="Isogai T."/>
            <person name="Sugano S."/>
        </authorList>
    </citation>
    <scope>NUCLEOTIDE SEQUENCE [LARGE SCALE MRNA]</scope>
    <source>
        <tissue>Thalamus</tissue>
    </source>
</reference>
<reference key="4">
    <citation type="submission" date="2004-05" db="EMBL/GenBank/DDBJ databases">
        <title>Cloning of human full open reading frames in Gateway(TM) system entry vector (pDONR201).</title>
        <authorList>
            <person name="Ebert L."/>
            <person name="Schick M."/>
            <person name="Neubert P."/>
            <person name="Schatten R."/>
            <person name="Henze S."/>
            <person name="Korn B."/>
        </authorList>
    </citation>
    <scope>NUCLEOTIDE SEQUENCE [LARGE SCALE MRNA]</scope>
    <scope>VARIANT MET-34</scope>
</reference>
<reference key="5">
    <citation type="journal article" date="2004" name="Nature">
        <title>The DNA sequence and comparative analysis of human chromosome 10.</title>
        <authorList>
            <person name="Deloukas P."/>
            <person name="Earthrowl M.E."/>
            <person name="Grafham D.V."/>
            <person name="Rubenfield M."/>
            <person name="French L."/>
            <person name="Steward C.A."/>
            <person name="Sims S.K."/>
            <person name="Jones M.C."/>
            <person name="Searle S."/>
            <person name="Scott C."/>
            <person name="Howe K."/>
            <person name="Hunt S.E."/>
            <person name="Andrews T.D."/>
            <person name="Gilbert J.G.R."/>
            <person name="Swarbreck D."/>
            <person name="Ashurst J.L."/>
            <person name="Taylor A."/>
            <person name="Battles J."/>
            <person name="Bird C.P."/>
            <person name="Ainscough R."/>
            <person name="Almeida J.P."/>
            <person name="Ashwell R.I.S."/>
            <person name="Ambrose K.D."/>
            <person name="Babbage A.K."/>
            <person name="Bagguley C.L."/>
            <person name="Bailey J."/>
            <person name="Banerjee R."/>
            <person name="Bates K."/>
            <person name="Beasley H."/>
            <person name="Bray-Allen S."/>
            <person name="Brown A.J."/>
            <person name="Brown J.Y."/>
            <person name="Burford D.C."/>
            <person name="Burrill W."/>
            <person name="Burton J."/>
            <person name="Cahill P."/>
            <person name="Camire D."/>
            <person name="Carter N.P."/>
            <person name="Chapman J.C."/>
            <person name="Clark S.Y."/>
            <person name="Clarke G."/>
            <person name="Clee C.M."/>
            <person name="Clegg S."/>
            <person name="Corby N."/>
            <person name="Coulson A."/>
            <person name="Dhami P."/>
            <person name="Dutta I."/>
            <person name="Dunn M."/>
            <person name="Faulkner L."/>
            <person name="Frankish A."/>
            <person name="Frankland J.A."/>
            <person name="Garner P."/>
            <person name="Garnett J."/>
            <person name="Gribble S."/>
            <person name="Griffiths C."/>
            <person name="Grocock R."/>
            <person name="Gustafson E."/>
            <person name="Hammond S."/>
            <person name="Harley J.L."/>
            <person name="Hart E."/>
            <person name="Heath P.D."/>
            <person name="Ho T.P."/>
            <person name="Hopkins B."/>
            <person name="Horne J."/>
            <person name="Howden P.J."/>
            <person name="Huckle E."/>
            <person name="Hynds C."/>
            <person name="Johnson C."/>
            <person name="Johnson D."/>
            <person name="Kana A."/>
            <person name="Kay M."/>
            <person name="Kimberley A.M."/>
            <person name="Kershaw J.K."/>
            <person name="Kokkinaki M."/>
            <person name="Laird G.K."/>
            <person name="Lawlor S."/>
            <person name="Lee H.M."/>
            <person name="Leongamornlert D.A."/>
            <person name="Laird G."/>
            <person name="Lloyd C."/>
            <person name="Lloyd D.M."/>
            <person name="Loveland J."/>
            <person name="Lovell J."/>
            <person name="McLaren S."/>
            <person name="McLay K.E."/>
            <person name="McMurray A."/>
            <person name="Mashreghi-Mohammadi M."/>
            <person name="Matthews L."/>
            <person name="Milne S."/>
            <person name="Nickerson T."/>
            <person name="Nguyen M."/>
            <person name="Overton-Larty E."/>
            <person name="Palmer S.A."/>
            <person name="Pearce A.V."/>
            <person name="Peck A.I."/>
            <person name="Pelan S."/>
            <person name="Phillimore B."/>
            <person name="Porter K."/>
            <person name="Rice C.M."/>
            <person name="Rogosin A."/>
            <person name="Ross M.T."/>
            <person name="Sarafidou T."/>
            <person name="Sehra H.K."/>
            <person name="Shownkeen R."/>
            <person name="Skuce C.D."/>
            <person name="Smith M."/>
            <person name="Standring L."/>
            <person name="Sycamore N."/>
            <person name="Tester J."/>
            <person name="Thorpe A."/>
            <person name="Torcasso W."/>
            <person name="Tracey A."/>
            <person name="Tromans A."/>
            <person name="Tsolas J."/>
            <person name="Wall M."/>
            <person name="Walsh J."/>
            <person name="Wang H."/>
            <person name="Weinstock K."/>
            <person name="West A.P."/>
            <person name="Willey D.L."/>
            <person name="Whitehead S.L."/>
            <person name="Wilming L."/>
            <person name="Wray P.W."/>
            <person name="Young L."/>
            <person name="Chen Y."/>
            <person name="Lovering R.C."/>
            <person name="Moschonas N.K."/>
            <person name="Siebert R."/>
            <person name="Fechtel K."/>
            <person name="Bentley D."/>
            <person name="Durbin R.M."/>
            <person name="Hubbard T."/>
            <person name="Doucette-Stamm L."/>
            <person name="Beck S."/>
            <person name="Smith D.R."/>
            <person name="Rogers J."/>
        </authorList>
    </citation>
    <scope>NUCLEOTIDE SEQUENCE [LARGE SCALE GENOMIC DNA]</scope>
</reference>
<reference key="6">
    <citation type="journal article" date="2004" name="Genome Res.">
        <title>The status, quality, and expansion of the NIH full-length cDNA project: the Mammalian Gene Collection (MGC).</title>
        <authorList>
            <consortium name="The MGC Project Team"/>
        </authorList>
    </citation>
    <scope>NUCLEOTIDE SEQUENCE [LARGE SCALE MRNA]</scope>
    <source>
        <tissue>Skin</tissue>
    </source>
</reference>
<reference key="7">
    <citation type="submission" date="2007-03" db="UniProtKB">
        <authorList>
            <person name="Lubec G."/>
            <person name="Vishwanath V."/>
        </authorList>
    </citation>
    <scope>PROTEIN SEQUENCE OF 80-97 AND 128-149</scope>
    <scope>IDENTIFICATION BY MASS SPECTROMETRY</scope>
    <source>
        <tissue>Brain</tissue>
        <tissue>Cajal-Retzius cell</tissue>
    </source>
</reference>
<reference key="8">
    <citation type="journal article" date="2000" name="J. Cell Biol.">
        <title>ADP ribosylation factor-like protein 2 (Arl2) regulates the interaction of tubulin-folding cofactor D with native tubulin.</title>
        <authorList>
            <person name="Bhamidipati A."/>
            <person name="Lewis S.A."/>
            <person name="Cowan N.J."/>
        </authorList>
    </citation>
    <scope>LACK OF INTERACTION WITH TBCC</scope>
</reference>
<reference key="9">
    <citation type="journal article" date="2001" name="J. Biol. Chem.">
        <title>ADP-ribosylation factors (ARFs) and ARF-like 1 (ARL1) have both specific and shared effectors: characterizing ARL1-binding proteins.</title>
        <authorList>
            <person name="Van Valkenburgh H."/>
            <person name="Shern J.F."/>
            <person name="Sharer J.D."/>
            <person name="Zhu X."/>
            <person name="Kahn R.A."/>
        </authorList>
    </citation>
    <scope>INTERACTION WITH ARL2BP; GOLGA4; PDE6D AND UNC119</scope>
    <scope>MUTAGENESIS OF GLN-71</scope>
</reference>
<reference key="10">
    <citation type="journal article" date="2002" name="Hum. Mol. Genet.">
        <title>Localization in the human retina of the X-linked retinitis pigmentosa protein RP2, its homologue cofactor C and the RP2 interacting protein Arl3.</title>
        <authorList>
            <person name="Grayson C."/>
            <person name="Bartolini F."/>
            <person name="Chapple J.P."/>
            <person name="Willison K.R."/>
            <person name="Bhamidipati A."/>
            <person name="Lewis S.A."/>
            <person name="Luthert P.J."/>
            <person name="Hardcastle A.J."/>
            <person name="Cowan N.J."/>
            <person name="Cheetham M.E."/>
        </authorList>
    </citation>
    <scope>ASSOCIATION WITH MICROTUBULES</scope>
    <scope>SUBCELLULAR LOCATION</scope>
    <scope>TISSUE SPECIFICITY</scope>
</reference>
<reference key="11">
    <citation type="journal article" date="2002" name="J. Biol. Chem.">
        <title>Functional overlap between retinitis pigmentosa 2 protein and the tubulin-specific chaperone cofactor C.</title>
        <authorList>
            <person name="Bartolini F."/>
            <person name="Bhamidipati A."/>
            <person name="Thomas S."/>
            <person name="Schwahn U."/>
            <person name="Lewis S.A."/>
            <person name="Cowan N.J."/>
        </authorList>
    </citation>
    <scope>INTERACTION WITH RP2 AND ARL2BP</scope>
    <scope>MUTAGENESIS OF THR-31 AND GLN-71</scope>
</reference>
<reference key="12">
    <citation type="journal article" date="2004" name="Nat. Cell Biol.">
        <title>Targeting of the Arf-like GTPase Arl3p to the Golgi requires N-terminal acetylation and the membrane protein Sys1p.</title>
        <authorList>
            <person name="Behnia R."/>
            <person name="Panic B."/>
            <person name="Whyte J.R.C."/>
            <person name="Munro S."/>
        </authorList>
    </citation>
    <scope>INTERACTION WITH SYS1</scope>
    <scope>SUBCELLULAR LOCATION</scope>
</reference>
<reference key="13">
    <citation type="journal article" date="2006" name="Mol. Biol. Cell">
        <title>Arl2 and Arl3 regulate different microtubule-dependent processes.</title>
        <authorList>
            <person name="Zhou C."/>
            <person name="Cunningham L."/>
            <person name="Marcus A.I."/>
            <person name="Li Y."/>
            <person name="Kahn R.A."/>
        </authorList>
    </citation>
    <scope>FUNCTION</scope>
    <scope>MUTAGENESIS OF GLN-71</scope>
    <scope>SUBCELLULAR LOCATION</scope>
    <scope>MICROTUBULE-ASSOCIATED</scope>
</reference>
<reference key="14">
    <citation type="journal article" date="2006" name="Structure">
        <title>Crystal structure of the human retinitis pigmentosa 2 protein and its interaction with Arl3.</title>
        <authorList>
            <person name="Kuehnel K."/>
            <person name="Veltel S."/>
            <person name="Schlichting I."/>
            <person name="Wittinghofer A."/>
        </authorList>
    </citation>
    <scope>INTERACTION WITH RP2</scope>
</reference>
<reference key="15">
    <citation type="journal article" date="2008" name="FEBS Lett.">
        <title>Specificity of Arl2/Arl3 signaling is mediated by a ternary Arl3-effector-GAP complex.</title>
        <authorList>
            <person name="Veltel S."/>
            <person name="Kravchenko A."/>
            <person name="Ismail S."/>
            <person name="Wittinghofer A."/>
        </authorList>
    </citation>
    <scope>FUNCTION</scope>
    <scope>GTP/GDP BINDING</scope>
    <scope>IDENTIFICATION IN A COMPLEX WITH UNC119 AND RP2</scope>
    <scope>SUBCELLULAR LOCATION</scope>
</reference>
<reference key="16">
    <citation type="journal article" date="2010" name="Sci. Signal.">
        <title>Quantitative phosphoproteomics reveals widespread full phosphorylation site occupancy during mitosis.</title>
        <authorList>
            <person name="Olsen J.V."/>
            <person name="Vermeulen M."/>
            <person name="Santamaria A."/>
            <person name="Kumar C."/>
            <person name="Miller M.L."/>
            <person name="Jensen L.J."/>
            <person name="Gnad F."/>
            <person name="Cox J."/>
            <person name="Jensen T.S."/>
            <person name="Nigg E.A."/>
            <person name="Brunak S."/>
            <person name="Mann M."/>
        </authorList>
    </citation>
    <scope>PHOSPHORYLATION [LARGE SCALE ANALYSIS] AT SER-5</scope>
    <scope>IDENTIFICATION BY MASS SPECTROMETRY [LARGE SCALE ANALYSIS]</scope>
    <source>
        <tissue>Cervix carcinoma</tissue>
    </source>
</reference>
<reference key="17">
    <citation type="journal article" date="2011" name="BMC Syst. Biol.">
        <title>Initial characterization of the human central proteome.</title>
        <authorList>
            <person name="Burkard T.R."/>
            <person name="Planyavsky M."/>
            <person name="Kaupe I."/>
            <person name="Breitwieser F.P."/>
            <person name="Buerckstuemmer T."/>
            <person name="Bennett K.L."/>
            <person name="Superti-Furga G."/>
            <person name="Colinge J."/>
        </authorList>
    </citation>
    <scope>IDENTIFICATION BY MASS SPECTROMETRY [LARGE SCALE ANALYSIS]</scope>
</reference>
<reference key="18">
    <citation type="journal article" date="2011" name="Genes Dev.">
        <title>An ARL3-UNC119-RP2 GTPase cycle targets myristoylated NPHP3 to the primary cilium.</title>
        <authorList>
            <person name="Wright K.J."/>
            <person name="Baye L.M."/>
            <person name="Olivier-Mason A."/>
            <person name="Mukhopadhyay S."/>
            <person name="Sang L."/>
            <person name="Kwong M."/>
            <person name="Wang W."/>
            <person name="Pretorius P.R."/>
            <person name="Sheffield V.C."/>
            <person name="Sengupta P."/>
            <person name="Slusarski D.C."/>
            <person name="Jackson P.K."/>
        </authorList>
    </citation>
    <scope>FUNCTION</scope>
    <scope>MUTAGENESIS OF THR-31 AND GLN-71</scope>
    <scope>INTERACTION WITH DNAAF9</scope>
</reference>
<reference key="19">
    <citation type="journal article" date="2014" name="J. Proteomics">
        <title>An enzyme assisted RP-RPLC approach for in-depth analysis of human liver phosphoproteome.</title>
        <authorList>
            <person name="Bian Y."/>
            <person name="Song C."/>
            <person name="Cheng K."/>
            <person name="Dong M."/>
            <person name="Wang F."/>
            <person name="Huang J."/>
            <person name="Sun D."/>
            <person name="Wang L."/>
            <person name="Ye M."/>
            <person name="Zou H."/>
        </authorList>
    </citation>
    <scope>IDENTIFICATION BY MASS SPECTROMETRY [LARGE SCALE ANALYSIS]</scope>
    <source>
        <tissue>Liver</tissue>
    </source>
</reference>
<reference key="20">
    <citation type="journal article" date="2015" name="Proteomics">
        <title>N-terminome analysis of the human mitochondrial proteome.</title>
        <authorList>
            <person name="Vaca Jacome A.S."/>
            <person name="Rabilloud T."/>
            <person name="Schaeffer-Reiss C."/>
            <person name="Rompais M."/>
            <person name="Ayoub D."/>
            <person name="Lane L."/>
            <person name="Bairoch A."/>
            <person name="Van Dorsselaer A."/>
            <person name="Carapito C."/>
        </authorList>
    </citation>
    <scope>IDENTIFICATION BY MASS SPECTROMETRY [LARGE SCALE ANALYSIS]</scope>
</reference>
<reference key="21">
    <citation type="journal article" date="2016" name="PLoS ONE">
        <title>De novo occurrence of a variant in ARL3 and apparent autosomal dominant transmission of retinitis pigmentosa.</title>
        <authorList>
            <person name="Strom S.P."/>
            <person name="Clark M.J."/>
            <person name="Martinez A."/>
            <person name="Garcia S."/>
            <person name="Abelazeem A.A."/>
            <person name="Matynia A."/>
            <person name="Parikh S."/>
            <person name="Sullivan L.S."/>
            <person name="Bowne S.J."/>
            <person name="Daiger S.P."/>
            <person name="Gorin M.B."/>
        </authorList>
    </citation>
    <scope>INVOLVEMENT IN RP83</scope>
    <scope>VARIANT RP83 CYS-90</scope>
</reference>
<reference key="22">
    <citation type="journal article" date="2018" name="Am. J. Hum. Genet.">
        <title>ARL3 Mutations Cause Joubert Syndrome by Disrupting Ciliary Protein Composition.</title>
        <authorList>
            <person name="Alkanderi S."/>
            <person name="Molinari E."/>
            <person name="Shaheen R."/>
            <person name="Elmaghloob Y."/>
            <person name="Stephen L.A."/>
            <person name="Sammut V."/>
            <person name="Ramsbottom S.A."/>
            <person name="Srivastava S."/>
            <person name="Cairns G."/>
            <person name="Edwards N."/>
            <person name="Rice S.J."/>
            <person name="Ewida N."/>
            <person name="Alhashem A."/>
            <person name="White K."/>
            <person name="Miles C.G."/>
            <person name="Steel D.H."/>
            <person name="Alkuraya F.S."/>
            <person name="Ismail S."/>
            <person name="Sayer J.A."/>
        </authorList>
    </citation>
    <scope>FUNCTION</scope>
    <scope>SUBCELLULAR LOCATION</scope>
    <scope>INVOLVEMENT IN JBTS35</scope>
    <scope>VARIANTS JBTS35 CYS-149 AND HIS-149</scope>
    <scope>CHARACTERIZATION OF VARIANT JBTS35 HIS-149</scope>
</reference>
<gene>
    <name type="primary">ARL3</name>
    <name type="synonym">ARFL3</name>
</gene>
<accession>P36405</accession>
<accession>B2R6C7</accession>
<accession>Q53X83</accession>
<accession>Q5JSM2</accession>
<proteinExistence type="evidence at protein level"/>
<comment type="function">
    <text evidence="2 9 10 11">Small GTP-binding protein which cycles between an inactive GDP-bound and an active GTP-bound form, and the rate of cycling is regulated by guanine nucleotide exchange factors (GEF) and GTPase-activating proteins (GAP) (PubMed:16525022, PubMed:18588884). Required for normal cytokinesis and cilia signaling (PubMed:22085962). Requires assistance from GTPase-activating proteins (GAPs) like RP2 and PDE6D, in order to cycle between inactive GDP-bound and active GTP-bound forms. Required for targeting proteins to the cilium, including myristoylated NPHP3 and prenylated INPP5E (PubMed:30269812). Targets NPHP3 to the ciliary membrane by releasing myristoylated NPHP3 from UNC119B cargo adapter into the cilium (PubMed:22085962). Required for PKD1:PKD2 complex targeting from the trans-Golgi network to the cilium (By similarity).</text>
</comment>
<comment type="subunit">
    <text evidence="2 4 5 7 8 9 10 11">Found in a complex with ARL3, RP2 and UNC119 (or UNC119B); RP2 induces hydrolysis of GTP ARL3 in the complex, leading to the release of UNC119 (or UNC119B) (PubMed:11303027, PubMed:11847227, PubMed:18588884). Interacts with RP2; interaction is direct and stimulated with the activated GTP-bound form of ARL3 (PubMed:16472755). Interacts with SYS1 (PubMed:11303027, PubMed:11847227, PubMed:15077113). The GTP-bound form interacts with ARL2BP and PDE6D (PubMed:11303027, PubMed:11847227). Microtubule-associated protein (PubMed:11303027, PubMed:16525022). May interact with GOLGA4 (PubMed:11303027). Interacts with GGA1; the interaction recruits PKD1:PKD2 complex to trans-Golgi network and is required for ciliary targeting of PKD1:PKD2 complex (By similarity). Interacts with DNAAF9 (PubMed:22085962).</text>
</comment>
<comment type="interaction">
    <interactant intactId="EBI-712710">
        <id>P36405</id>
    </interactant>
    <interactant intactId="EBI-3449344">
        <id>Q9Y2Y0</id>
        <label>ARL2BP</label>
    </interactant>
    <organismsDiffer>false</organismsDiffer>
    <experiments>7</experiments>
</comment>
<comment type="interaction">
    <interactant intactId="EBI-712710">
        <id>P36405</id>
    </interactant>
    <interactant intactId="EBI-712685">
        <id>O43924</id>
        <label>PDE6D</label>
    </interactant>
    <organismsDiffer>false</organismsDiffer>
    <experiments>11</experiments>
</comment>
<comment type="interaction">
    <interactant intactId="EBI-712710">
        <id>P36405</id>
    </interactant>
    <interactant intactId="EBI-3505105">
        <id>O60907</id>
        <label>TBL1X</label>
    </interactant>
    <organismsDiffer>false</organismsDiffer>
    <experiments>3</experiments>
</comment>
<comment type="interaction">
    <interactant intactId="EBI-712710">
        <id>P36405</id>
    </interactant>
    <interactant intactId="EBI-711260">
        <id>Q13432</id>
        <label>UNC119</label>
    </interactant>
    <organismsDiffer>false</organismsDiffer>
    <experiments>15</experiments>
</comment>
<comment type="subcellular location">
    <subcellularLocation>
        <location>Golgi apparatus membrane</location>
        <topology>Peripheral membrane protein</topology>
        <orientation>Cytoplasmic side</orientation>
    </subcellularLocation>
    <subcellularLocation>
        <location>Cytoplasm</location>
        <location>Cytoskeleton</location>
        <location>Spindle</location>
    </subcellularLocation>
    <subcellularLocation>
        <location>Nucleus</location>
    </subcellularLocation>
    <subcellularLocation>
        <location>Cytoplasm</location>
        <location>Cytoskeleton</location>
        <location>Microtubule organizing center</location>
        <location>Centrosome</location>
    </subcellularLocation>
    <subcellularLocation>
        <location>Cytoplasm</location>
    </subcellularLocation>
    <subcellularLocation>
        <location evidence="13">Cell projection</location>
        <location evidence="13">Cilium</location>
    </subcellularLocation>
    <text>Detected predominantly in the photoreceptor connecting cilium. Present on the mitotic spindle. Centrosome-associated throughout the cell cycle. Not detected to interphase microtubules.</text>
</comment>
<comment type="tissue specificity">
    <text evidence="6">Expressed in the retina. Strongly expressed in connecting cilium, the myoid region of the inner segments (IS) and in cone photoreceptors (at protein level).</text>
</comment>
<comment type="disease" evidence="13">
    <disease id="DI-05361">
        <name>Joubert syndrome 35</name>
        <acronym>JBTS35</acronym>
        <description>A form of Joubert syndrome, a disorder presenting with cerebellar ataxia, oculomotor apraxia, hypotonia, neonatal breathing abnormalities and psychomotor delay. Neuroradiologically, it is characterized by cerebellar vermian hypoplasia/aplasia, thickened and reoriented superior cerebellar peduncles, and an abnormally large interpeduncular fossa, giving the appearance of a molar tooth on transaxial slices (molar tooth sign). Additional variable features include retinal dystrophy, renal disease, liver fibrosis, and polydactyly. JBTS35 inheritance is autosomal recessive.</description>
        <dbReference type="MIM" id="618161"/>
    </disease>
    <text>The disease is caused by variants affecting the gene represented in this entry.</text>
</comment>
<comment type="disease" evidence="12">
    <disease id="DI-05372">
        <name>Retinitis pigmentosa 83</name>
        <acronym>RP83</acronym>
        <description>An autosomal dominant form of retinitis pigmentosa, a retinal dystrophy belonging to the group of pigmentary retinopathies. Retinitis pigmentosa is characterized by retinal pigment deposits visible on fundus examination and primary loss of rod photoreceptor cells followed by secondary loss of cone photoreceptors. Patients typically have night vision blindness and loss of midperipheral visual field. As their condition progresses, they lose their far peripheral visual field and eventually central vision as well.</description>
        <dbReference type="MIM" id="618173"/>
    </disease>
    <text>The disease may be caused by variants affecting the gene represented in this entry.</text>
</comment>
<comment type="similarity">
    <text evidence="15">Belongs to the small GTPase superfamily. Arf family.</text>
</comment>
<protein>
    <recommendedName>
        <fullName>ADP-ribosylation factor-like protein 3</fullName>
    </recommendedName>
</protein>
<feature type="initiator methionine" description="Removed" evidence="3">
    <location>
        <position position="1"/>
    </location>
</feature>
<feature type="chain" id="PRO_0000207456" description="ADP-ribosylation factor-like protein 3">
    <location>
        <begin position="2"/>
        <end position="182"/>
    </location>
</feature>
<feature type="binding site" evidence="1">
    <location>
        <begin position="24"/>
        <end position="31"/>
    </location>
    <ligand>
        <name>GTP</name>
        <dbReference type="ChEBI" id="CHEBI:37565"/>
    </ligand>
</feature>
<feature type="binding site" evidence="1">
    <location>
        <position position="31"/>
    </location>
    <ligand>
        <name>Mg(2+)</name>
        <dbReference type="ChEBI" id="CHEBI:18420"/>
    </ligand>
</feature>
<feature type="binding site" evidence="1">
    <location>
        <position position="48"/>
    </location>
    <ligand>
        <name>GTP</name>
        <dbReference type="ChEBI" id="CHEBI:37565"/>
    </ligand>
</feature>
<feature type="binding site" evidence="1">
    <location>
        <position position="48"/>
    </location>
    <ligand>
        <name>Mg(2+)</name>
        <dbReference type="ChEBI" id="CHEBI:18420"/>
    </ligand>
</feature>
<feature type="binding site" evidence="1">
    <location>
        <begin position="67"/>
        <end position="71"/>
    </location>
    <ligand>
        <name>GTP</name>
        <dbReference type="ChEBI" id="CHEBI:37565"/>
    </ligand>
</feature>
<feature type="binding site" evidence="1">
    <location>
        <position position="70"/>
    </location>
    <ligand>
        <name>GTP</name>
        <dbReference type="ChEBI" id="CHEBI:37565"/>
    </ligand>
</feature>
<feature type="binding site" evidence="1">
    <location>
        <begin position="126"/>
        <end position="129"/>
    </location>
    <ligand>
        <name>GTP</name>
        <dbReference type="ChEBI" id="CHEBI:37565"/>
    </ligand>
</feature>
<feature type="binding site" evidence="1">
    <location>
        <begin position="159"/>
        <end position="161"/>
    </location>
    <ligand>
        <name>GTP</name>
        <dbReference type="ChEBI" id="CHEBI:37565"/>
    </ligand>
</feature>
<feature type="modified residue" description="Phosphoserine" evidence="16">
    <location>
        <position position="5"/>
    </location>
</feature>
<feature type="lipid moiety-binding region" description="N-myristoyl glycine" evidence="3">
    <location>
        <position position="2"/>
    </location>
</feature>
<feature type="sequence variant" id="VAR_014869" description="In dbSNP:rs1141895." evidence="14">
    <original>L</original>
    <variation>M</variation>
    <location>
        <position position="34"/>
    </location>
</feature>
<feature type="sequence variant" id="VAR_081340" description="In RP83; uncertain significance; dbSNP:rs1564730440." evidence="12">
    <original>Y</original>
    <variation>C</variation>
    <location>
        <position position="90"/>
    </location>
</feature>
<feature type="sequence variant" id="VAR_081202" description="In JBTS35; dbSNP:rs776901858." evidence="13">
    <original>R</original>
    <variation>C</variation>
    <location>
        <position position="149"/>
    </location>
</feature>
<feature type="sequence variant" id="VAR_081203" description="In JBTS35; decreased release of NPHP3 and INPP5E cargos to the cilium; dbSNP:rs770782663." evidence="13">
    <original>R</original>
    <variation>H</variation>
    <location>
        <position position="149"/>
    </location>
</feature>
<feature type="mutagenesis site" description="Enhances the interaction with RP2." evidence="5 11">
    <original>T</original>
    <variation>N</variation>
    <location>
        <position position="31"/>
    </location>
</feature>
<feature type="mutagenesis site" description="Enhances the interaction with RP2. Does not induce a mitotic arrest resulting from the loss of the microtubule-based mitotic spindle. Induces release of myristoylated proteins from UNC119. Interacts with ARL2BP, GOLGA4, PDE6D and UNC119." evidence="4 5 9 11">
    <original>Q</original>
    <variation>L</variation>
    <location>
        <position position="71"/>
    </location>
</feature>